<keyword id="KW-0963">Cytoplasm</keyword>
<keyword id="KW-0489">Methyltransferase</keyword>
<keyword id="KW-0949">S-adenosyl-L-methionine</keyword>
<keyword id="KW-0808">Transferase</keyword>
<comment type="function">
    <text evidence="1">Methylates ribosomal protein L11.</text>
</comment>
<comment type="catalytic activity">
    <reaction evidence="1">
        <text>L-lysyl-[protein] + 3 S-adenosyl-L-methionine = N(6),N(6),N(6)-trimethyl-L-lysyl-[protein] + 3 S-adenosyl-L-homocysteine + 3 H(+)</text>
        <dbReference type="Rhea" id="RHEA:54192"/>
        <dbReference type="Rhea" id="RHEA-COMP:9752"/>
        <dbReference type="Rhea" id="RHEA-COMP:13826"/>
        <dbReference type="ChEBI" id="CHEBI:15378"/>
        <dbReference type="ChEBI" id="CHEBI:29969"/>
        <dbReference type="ChEBI" id="CHEBI:57856"/>
        <dbReference type="ChEBI" id="CHEBI:59789"/>
        <dbReference type="ChEBI" id="CHEBI:61961"/>
    </reaction>
</comment>
<comment type="subcellular location">
    <subcellularLocation>
        <location evidence="1">Cytoplasm</location>
    </subcellularLocation>
</comment>
<comment type="similarity">
    <text evidence="1">Belongs to the methyltransferase superfamily. PrmA family.</text>
</comment>
<protein>
    <recommendedName>
        <fullName evidence="1">Ribosomal protein L11 methyltransferase</fullName>
        <shortName evidence="1">L11 Mtase</shortName>
        <ecNumber evidence="1">2.1.1.-</ecNumber>
    </recommendedName>
</protein>
<sequence>MPWIQIKLNATNENAELIGDMLMEETGALSVTFLDAHDTPVFEPLPGETRLWGDTDVLALYDAEADTQLIMSQIKASNMLAEGFAYKIEQLEDKDWEREWMDNFHPMKFGQRLWICPSWRDIPDPTAVNVMLDPGLAFGTGTHPTTALCLEWLEGLDLSGKTVIDFGCGSGILAIAAIKLGAEKVIGIDIDPQALLASKDNAQRNGVADQLDVYLPQDQPEGLLADVVVANILAAPLRELSSIIKGLVKPNGQLAMSGVLDTQAEDVANYYRDELHIDPIVEQSEWCRISGRKQG</sequence>
<accession>P60094</accession>
<accession>Q7MGT9</accession>
<organism>
    <name type="scientific">Vibrio vulnificus (strain YJ016)</name>
    <dbReference type="NCBI Taxonomy" id="196600"/>
    <lineage>
        <taxon>Bacteria</taxon>
        <taxon>Pseudomonadati</taxon>
        <taxon>Pseudomonadota</taxon>
        <taxon>Gammaproteobacteria</taxon>
        <taxon>Vibrionales</taxon>
        <taxon>Vibrionaceae</taxon>
        <taxon>Vibrio</taxon>
    </lineage>
</organism>
<feature type="chain" id="PRO_0000192333" description="Ribosomal protein L11 methyltransferase">
    <location>
        <begin position="1"/>
        <end position="295"/>
    </location>
</feature>
<feature type="binding site" evidence="1">
    <location>
        <position position="146"/>
    </location>
    <ligand>
        <name>S-adenosyl-L-methionine</name>
        <dbReference type="ChEBI" id="CHEBI:59789"/>
    </ligand>
</feature>
<feature type="binding site" evidence="1">
    <location>
        <position position="167"/>
    </location>
    <ligand>
        <name>S-adenosyl-L-methionine</name>
        <dbReference type="ChEBI" id="CHEBI:59789"/>
    </ligand>
</feature>
<feature type="binding site" evidence="1">
    <location>
        <position position="189"/>
    </location>
    <ligand>
        <name>S-adenosyl-L-methionine</name>
        <dbReference type="ChEBI" id="CHEBI:59789"/>
    </ligand>
</feature>
<feature type="binding site" evidence="1">
    <location>
        <position position="231"/>
    </location>
    <ligand>
        <name>S-adenosyl-L-methionine</name>
        <dbReference type="ChEBI" id="CHEBI:59789"/>
    </ligand>
</feature>
<reference key="1">
    <citation type="journal article" date="2003" name="Genome Res.">
        <title>Comparative genome analysis of Vibrio vulnificus, a marine pathogen.</title>
        <authorList>
            <person name="Chen C.-Y."/>
            <person name="Wu K.-M."/>
            <person name="Chang Y.-C."/>
            <person name="Chang C.-H."/>
            <person name="Tsai H.-C."/>
            <person name="Liao T.-L."/>
            <person name="Liu Y.-M."/>
            <person name="Chen H.-J."/>
            <person name="Shen A.B.-T."/>
            <person name="Li J.-C."/>
            <person name="Su T.-L."/>
            <person name="Shao C.-P."/>
            <person name="Lee C.-T."/>
            <person name="Hor L.-I."/>
            <person name="Tsai S.-F."/>
        </authorList>
    </citation>
    <scope>NUCLEOTIDE SEQUENCE [LARGE SCALE GENOMIC DNA]</scope>
    <source>
        <strain>YJ016</strain>
    </source>
</reference>
<evidence type="ECO:0000255" key="1">
    <source>
        <dbReference type="HAMAP-Rule" id="MF_00735"/>
    </source>
</evidence>
<gene>
    <name evidence="1" type="primary">prmA</name>
    <name type="ordered locus">VV3137</name>
</gene>
<name>PRMA_VIBVY</name>
<proteinExistence type="inferred from homology"/>
<dbReference type="EC" id="2.1.1.-" evidence="1"/>
<dbReference type="EMBL" id="BA000037">
    <property type="protein sequence ID" value="BAC95901.1"/>
    <property type="molecule type" value="Genomic_DNA"/>
</dbReference>
<dbReference type="RefSeq" id="WP_011151370.1">
    <property type="nucleotide sequence ID" value="NC_005139.1"/>
</dbReference>
<dbReference type="SMR" id="P60094"/>
<dbReference type="STRING" id="672.VV93_v1c28550"/>
<dbReference type="GeneID" id="93895498"/>
<dbReference type="KEGG" id="vvy:VV3137"/>
<dbReference type="eggNOG" id="COG2264">
    <property type="taxonomic scope" value="Bacteria"/>
</dbReference>
<dbReference type="HOGENOM" id="CLU_049382_4_1_6"/>
<dbReference type="Proteomes" id="UP000002675">
    <property type="component" value="Chromosome I"/>
</dbReference>
<dbReference type="GO" id="GO:0005829">
    <property type="term" value="C:cytosol"/>
    <property type="evidence" value="ECO:0007669"/>
    <property type="project" value="TreeGrafter"/>
</dbReference>
<dbReference type="GO" id="GO:0016279">
    <property type="term" value="F:protein-lysine N-methyltransferase activity"/>
    <property type="evidence" value="ECO:0007669"/>
    <property type="project" value="TreeGrafter"/>
</dbReference>
<dbReference type="GO" id="GO:0032259">
    <property type="term" value="P:methylation"/>
    <property type="evidence" value="ECO:0007669"/>
    <property type="project" value="UniProtKB-KW"/>
</dbReference>
<dbReference type="CDD" id="cd02440">
    <property type="entry name" value="AdoMet_MTases"/>
    <property type="match status" value="1"/>
</dbReference>
<dbReference type="Gene3D" id="3.40.50.150">
    <property type="entry name" value="Vaccinia Virus protein VP39"/>
    <property type="match status" value="1"/>
</dbReference>
<dbReference type="HAMAP" id="MF_00735">
    <property type="entry name" value="Methyltr_PrmA"/>
    <property type="match status" value="1"/>
</dbReference>
<dbReference type="InterPro" id="IPR050078">
    <property type="entry name" value="Ribosomal_L11_MeTrfase_PrmA"/>
</dbReference>
<dbReference type="InterPro" id="IPR004498">
    <property type="entry name" value="Ribosomal_PrmA_MeTrfase"/>
</dbReference>
<dbReference type="InterPro" id="IPR029063">
    <property type="entry name" value="SAM-dependent_MTases_sf"/>
</dbReference>
<dbReference type="NCBIfam" id="TIGR00406">
    <property type="entry name" value="prmA"/>
    <property type="match status" value="1"/>
</dbReference>
<dbReference type="PANTHER" id="PTHR43648">
    <property type="entry name" value="ELECTRON TRANSFER FLAVOPROTEIN BETA SUBUNIT LYSINE METHYLTRANSFERASE"/>
    <property type="match status" value="1"/>
</dbReference>
<dbReference type="PANTHER" id="PTHR43648:SF1">
    <property type="entry name" value="ELECTRON TRANSFER FLAVOPROTEIN BETA SUBUNIT LYSINE METHYLTRANSFERASE"/>
    <property type="match status" value="1"/>
</dbReference>
<dbReference type="Pfam" id="PF06325">
    <property type="entry name" value="PrmA"/>
    <property type="match status" value="1"/>
</dbReference>
<dbReference type="PIRSF" id="PIRSF000401">
    <property type="entry name" value="RPL11_MTase"/>
    <property type="match status" value="1"/>
</dbReference>
<dbReference type="SUPFAM" id="SSF53335">
    <property type="entry name" value="S-adenosyl-L-methionine-dependent methyltransferases"/>
    <property type="match status" value="1"/>
</dbReference>